<organism>
    <name type="scientific">Clostridium acetobutylicum (strain ATCC 824 / DSM 792 / JCM 1419 / IAM 19013 / LMG 5710 / NBRC 13948 / NRRL B-527 / VKM B-1787 / 2291 / W)</name>
    <dbReference type="NCBI Taxonomy" id="272562"/>
    <lineage>
        <taxon>Bacteria</taxon>
        <taxon>Bacillati</taxon>
        <taxon>Bacillota</taxon>
        <taxon>Clostridia</taxon>
        <taxon>Eubacteriales</taxon>
        <taxon>Clostridiaceae</taxon>
        <taxon>Clostridium</taxon>
    </lineage>
</organism>
<keyword id="KW-0004">4Fe-4S</keyword>
<keyword id="KW-0408">Iron</keyword>
<keyword id="KW-0411">Iron-sulfur</keyword>
<keyword id="KW-0414">Isoprene biosynthesis</keyword>
<keyword id="KW-0479">Metal-binding</keyword>
<keyword id="KW-0560">Oxidoreductase</keyword>
<keyword id="KW-1185">Reference proteome</keyword>
<evidence type="ECO:0000255" key="1">
    <source>
        <dbReference type="HAMAP-Rule" id="MF_00191"/>
    </source>
</evidence>
<evidence type="ECO:0000305" key="2"/>
<protein>
    <recommendedName>
        <fullName evidence="1">4-hydroxy-3-methylbut-2-enyl diphosphate reductase</fullName>
        <shortName evidence="1">HMBPP reductase</shortName>
        <ecNumber evidence="1">1.17.7.4</ecNumber>
    </recommendedName>
</protein>
<dbReference type="EC" id="1.17.7.4" evidence="1"/>
<dbReference type="EMBL" id="AE001437">
    <property type="protein sequence ID" value="AAK79811.1"/>
    <property type="molecule type" value="Genomic_DNA"/>
</dbReference>
<dbReference type="PIR" id="H97127">
    <property type="entry name" value="H97127"/>
</dbReference>
<dbReference type="RefSeq" id="NP_348471.1">
    <property type="nucleotide sequence ID" value="NC_003030.1"/>
</dbReference>
<dbReference type="RefSeq" id="WP_010965152.1">
    <property type="nucleotide sequence ID" value="NC_003030.1"/>
</dbReference>
<dbReference type="SMR" id="Q97I09"/>
<dbReference type="STRING" id="272562.CA_C1847"/>
<dbReference type="KEGG" id="cac:CA_C1847"/>
<dbReference type="PATRIC" id="fig|272562.8.peg.2051"/>
<dbReference type="eggNOG" id="COG0539">
    <property type="taxonomic scope" value="Bacteria"/>
</dbReference>
<dbReference type="eggNOG" id="COG0761">
    <property type="taxonomic scope" value="Bacteria"/>
</dbReference>
<dbReference type="HOGENOM" id="CLU_015805_3_1_9"/>
<dbReference type="OrthoDB" id="9804077at2"/>
<dbReference type="UniPathway" id="UPA00056">
    <property type="reaction ID" value="UER00097"/>
</dbReference>
<dbReference type="UniPathway" id="UPA00059">
    <property type="reaction ID" value="UER00105"/>
</dbReference>
<dbReference type="Proteomes" id="UP000000814">
    <property type="component" value="Chromosome"/>
</dbReference>
<dbReference type="GO" id="GO:0051539">
    <property type="term" value="F:4 iron, 4 sulfur cluster binding"/>
    <property type="evidence" value="ECO:0007669"/>
    <property type="project" value="UniProtKB-UniRule"/>
</dbReference>
<dbReference type="GO" id="GO:0051745">
    <property type="term" value="F:4-hydroxy-3-methylbut-2-enyl diphosphate reductase activity"/>
    <property type="evidence" value="ECO:0007669"/>
    <property type="project" value="UniProtKB-UniRule"/>
</dbReference>
<dbReference type="GO" id="GO:0046872">
    <property type="term" value="F:metal ion binding"/>
    <property type="evidence" value="ECO:0007669"/>
    <property type="project" value="UniProtKB-KW"/>
</dbReference>
<dbReference type="GO" id="GO:0003676">
    <property type="term" value="F:nucleic acid binding"/>
    <property type="evidence" value="ECO:0007669"/>
    <property type="project" value="InterPro"/>
</dbReference>
<dbReference type="GO" id="GO:0050992">
    <property type="term" value="P:dimethylallyl diphosphate biosynthetic process"/>
    <property type="evidence" value="ECO:0007669"/>
    <property type="project" value="UniProtKB-UniRule"/>
</dbReference>
<dbReference type="GO" id="GO:0019288">
    <property type="term" value="P:isopentenyl diphosphate biosynthetic process, methylerythritol 4-phosphate pathway"/>
    <property type="evidence" value="ECO:0007669"/>
    <property type="project" value="UniProtKB-UniRule"/>
</dbReference>
<dbReference type="GO" id="GO:0016114">
    <property type="term" value="P:terpenoid biosynthetic process"/>
    <property type="evidence" value="ECO:0007669"/>
    <property type="project" value="UniProtKB-UniRule"/>
</dbReference>
<dbReference type="CDD" id="cd13944">
    <property type="entry name" value="lytB_ispH"/>
    <property type="match status" value="1"/>
</dbReference>
<dbReference type="CDD" id="cd05687">
    <property type="entry name" value="S1_RPS1_repeat_ec1_hs1"/>
    <property type="match status" value="1"/>
</dbReference>
<dbReference type="CDD" id="cd04465">
    <property type="entry name" value="S1_RPS1_repeat_ec2_hs2"/>
    <property type="match status" value="1"/>
</dbReference>
<dbReference type="CDD" id="cd05688">
    <property type="entry name" value="S1_RPS1_repeat_ec3"/>
    <property type="match status" value="1"/>
</dbReference>
<dbReference type="FunFam" id="2.40.50.140:FF:000103">
    <property type="entry name" value="protein RRP5 homolog"/>
    <property type="match status" value="1"/>
</dbReference>
<dbReference type="FunFam" id="2.40.50.140:FF:000051">
    <property type="entry name" value="RNA-binding transcriptional accessory protein"/>
    <property type="match status" value="1"/>
</dbReference>
<dbReference type="Gene3D" id="3.40.50.11270">
    <property type="match status" value="1"/>
</dbReference>
<dbReference type="Gene3D" id="3.40.1010.20">
    <property type="entry name" value="4-hydroxy-3-methylbut-2-enyl diphosphate reductase, catalytic domain"/>
    <property type="match status" value="2"/>
</dbReference>
<dbReference type="Gene3D" id="2.40.50.140">
    <property type="entry name" value="Nucleic acid-binding proteins"/>
    <property type="match status" value="3"/>
</dbReference>
<dbReference type="HAMAP" id="MF_00191">
    <property type="entry name" value="IspH"/>
    <property type="match status" value="1"/>
</dbReference>
<dbReference type="InterPro" id="IPR003451">
    <property type="entry name" value="LytB/IspH"/>
</dbReference>
<dbReference type="InterPro" id="IPR012340">
    <property type="entry name" value="NA-bd_OB-fold"/>
</dbReference>
<dbReference type="InterPro" id="IPR035104">
    <property type="entry name" value="Ribosomal_protein_S1-like"/>
</dbReference>
<dbReference type="InterPro" id="IPR003029">
    <property type="entry name" value="S1_domain"/>
</dbReference>
<dbReference type="NCBIfam" id="TIGR00216">
    <property type="entry name" value="ispH_lytB"/>
    <property type="match status" value="1"/>
</dbReference>
<dbReference type="NCBIfam" id="NF000907">
    <property type="entry name" value="PRK00087.1"/>
    <property type="match status" value="1"/>
</dbReference>
<dbReference type="NCBIfam" id="NF002187">
    <property type="entry name" value="PRK01045.1-1"/>
    <property type="match status" value="1"/>
</dbReference>
<dbReference type="NCBIfam" id="NF005208">
    <property type="entry name" value="PRK06676.1"/>
    <property type="match status" value="1"/>
</dbReference>
<dbReference type="NCBIfam" id="NF009024">
    <property type="entry name" value="PRK12360.1"/>
    <property type="match status" value="1"/>
</dbReference>
<dbReference type="PANTHER" id="PTHR30426">
    <property type="entry name" value="4-HYDROXY-3-METHYLBUT-2-ENYL DIPHOSPHATE REDUCTASE"/>
    <property type="match status" value="1"/>
</dbReference>
<dbReference type="PANTHER" id="PTHR30426:SF0">
    <property type="entry name" value="4-HYDROXY-3-METHYLBUT-2-ENYL DIPHOSPHATE REDUCTASE"/>
    <property type="match status" value="1"/>
</dbReference>
<dbReference type="Pfam" id="PF02401">
    <property type="entry name" value="LYTB"/>
    <property type="match status" value="1"/>
</dbReference>
<dbReference type="Pfam" id="PF00575">
    <property type="entry name" value="S1"/>
    <property type="match status" value="3"/>
</dbReference>
<dbReference type="PRINTS" id="PR00681">
    <property type="entry name" value="RIBOSOMALS1"/>
</dbReference>
<dbReference type="SMART" id="SM00316">
    <property type="entry name" value="S1"/>
    <property type="match status" value="4"/>
</dbReference>
<dbReference type="SUPFAM" id="SSF50249">
    <property type="entry name" value="Nucleic acid-binding proteins"/>
    <property type="match status" value="4"/>
</dbReference>
<dbReference type="PROSITE" id="PS50126">
    <property type="entry name" value="S1"/>
    <property type="match status" value="3"/>
</dbReference>
<proteinExistence type="inferred from homology"/>
<accession>Q97I09</accession>
<comment type="function">
    <text evidence="1">Catalyzes the conversion of 1-hydroxy-2-methyl-2-(E)-butenyl 4-diphosphate (HMBPP) into a mixture of isopentenyl diphosphate (IPP) and dimethylallyl diphosphate (DMAPP). Acts in the terminal step of the DOXP/MEP pathway for isoprenoid precursor biosynthesis.</text>
</comment>
<comment type="catalytic activity">
    <reaction evidence="1">
        <text>isopentenyl diphosphate + 2 oxidized [2Fe-2S]-[ferredoxin] + H2O = (2E)-4-hydroxy-3-methylbut-2-enyl diphosphate + 2 reduced [2Fe-2S]-[ferredoxin] + 2 H(+)</text>
        <dbReference type="Rhea" id="RHEA:24488"/>
        <dbReference type="Rhea" id="RHEA-COMP:10000"/>
        <dbReference type="Rhea" id="RHEA-COMP:10001"/>
        <dbReference type="ChEBI" id="CHEBI:15377"/>
        <dbReference type="ChEBI" id="CHEBI:15378"/>
        <dbReference type="ChEBI" id="CHEBI:33737"/>
        <dbReference type="ChEBI" id="CHEBI:33738"/>
        <dbReference type="ChEBI" id="CHEBI:128753"/>
        <dbReference type="ChEBI" id="CHEBI:128769"/>
        <dbReference type="EC" id="1.17.7.4"/>
    </reaction>
</comment>
<comment type="catalytic activity">
    <reaction evidence="1">
        <text>dimethylallyl diphosphate + 2 oxidized [2Fe-2S]-[ferredoxin] + H2O = (2E)-4-hydroxy-3-methylbut-2-enyl diphosphate + 2 reduced [2Fe-2S]-[ferredoxin] + 2 H(+)</text>
        <dbReference type="Rhea" id="RHEA:24825"/>
        <dbReference type="Rhea" id="RHEA-COMP:10000"/>
        <dbReference type="Rhea" id="RHEA-COMP:10001"/>
        <dbReference type="ChEBI" id="CHEBI:15377"/>
        <dbReference type="ChEBI" id="CHEBI:15378"/>
        <dbReference type="ChEBI" id="CHEBI:33737"/>
        <dbReference type="ChEBI" id="CHEBI:33738"/>
        <dbReference type="ChEBI" id="CHEBI:57623"/>
        <dbReference type="ChEBI" id="CHEBI:128753"/>
        <dbReference type="EC" id="1.17.7.4"/>
    </reaction>
</comment>
<comment type="cofactor">
    <cofactor evidence="1">
        <name>[4Fe-4S] cluster</name>
        <dbReference type="ChEBI" id="CHEBI:49883"/>
    </cofactor>
    <text evidence="1">Binds 1 [4Fe-4S] cluster per subunit.</text>
</comment>
<comment type="pathway">
    <text evidence="1">Isoprenoid biosynthesis; dimethylallyl diphosphate biosynthesis; dimethylallyl diphosphate from (2E)-4-hydroxy-3-methylbutenyl diphosphate: step 1/1.</text>
</comment>
<comment type="pathway">
    <text evidence="1">Isoprenoid biosynthesis; isopentenyl diphosphate biosynthesis via DXP pathway; isopentenyl diphosphate from 1-deoxy-D-xylulose 5-phosphate: step 6/6.</text>
</comment>
<comment type="similarity">
    <text evidence="2">In the N-terminal section; belongs to the IspH family.</text>
</comment>
<name>ISPH_CLOAB</name>
<sequence>MRKVMLAEKAGFCFGVKRAVDMALLTQKEYNKKIYTLGELIHNNDVVDKLKDNNVYPIGIEDIDNLKENDVILIRSHGISEEIYKILLSKGLTVINATCPFVTKIQEKVKKYNELGYDIVIVGDKYHPEVIGINGWCDNKAIISKQGENLENITSESKVCIVSQTTEKLENWEKVLKEVKNRAIEVISFNTICNATSERQKIAKDLSNKVDFMVVIGGKQSSNTTKLYEICKSNCNETIHVENSGEIPENILKNKNCVIGVTAGASTPDWIIEEAISKMSENQISNETNNEMADAMKFIAENEGKIYVGASVTGEIIQVSEKEVFLNINYKRDGVIPKSEIDDDGKDLKELFTVGDKIVAKIIKLKDADNYVVLSVKELQREQGYKEIKEAFENKTTLNVVVKEDVKGGIIASYKGIRIFIPASHVELFHVDNLKEYIGKSFDVAIIEYSTKKRQTKIVASRRALLSKEKEKVEETVWNKLEEGQVVEGEVKRLTDFGAFVEIEGVDGLLHVSEISWGRVEKPADVLKIGDKIKVYVLSVDKENKKLSLSVKKLTENPWNNVEEKYPVGSVVLGKVIRFADFGAFVKLEPGVDGLVHISEISHKRIAKPSDALNVGEEIKAKILEVSSEEKKIGLSIREVEE</sequence>
<feature type="chain" id="PRO_0000128907" description="4-hydroxy-3-methylbut-2-enyl diphosphate reductase">
    <location>
        <begin position="1"/>
        <end position="642"/>
    </location>
</feature>
<feature type="domain" description="S1 motif 1">
    <location>
        <begin position="309"/>
        <end position="377"/>
    </location>
</feature>
<feature type="domain" description="S1 motif 2">
    <location>
        <begin position="484"/>
        <end position="552"/>
    </location>
</feature>
<feature type="domain" description="S1 motif 3">
    <location>
        <begin position="569"/>
        <end position="638"/>
    </location>
</feature>
<feature type="region of interest" description="4-hydroxy-3-methylbut-2-enyl diphosphate reductase">
    <location>
        <begin position="1"/>
        <end position="282"/>
    </location>
</feature>
<feature type="active site" description="Proton donor" evidence="1">
    <location>
        <position position="129"/>
    </location>
</feature>
<feature type="binding site" evidence="1">
    <location>
        <position position="13"/>
    </location>
    <ligand>
        <name>[4Fe-4S] cluster</name>
        <dbReference type="ChEBI" id="CHEBI:49883"/>
    </ligand>
</feature>
<feature type="binding site" evidence="1">
    <location>
        <position position="42"/>
    </location>
    <ligand>
        <name>(2E)-4-hydroxy-3-methylbut-2-enyl diphosphate</name>
        <dbReference type="ChEBI" id="CHEBI:128753"/>
    </ligand>
</feature>
<feature type="binding site" evidence="1">
    <location>
        <position position="42"/>
    </location>
    <ligand>
        <name>dimethylallyl diphosphate</name>
        <dbReference type="ChEBI" id="CHEBI:57623"/>
    </ligand>
</feature>
<feature type="binding site" evidence="1">
    <location>
        <position position="42"/>
    </location>
    <ligand>
        <name>isopentenyl diphosphate</name>
        <dbReference type="ChEBI" id="CHEBI:128769"/>
    </ligand>
</feature>
<feature type="binding site" evidence="1">
    <location>
        <position position="77"/>
    </location>
    <ligand>
        <name>(2E)-4-hydroxy-3-methylbut-2-enyl diphosphate</name>
        <dbReference type="ChEBI" id="CHEBI:128753"/>
    </ligand>
</feature>
<feature type="binding site" evidence="1">
    <location>
        <position position="77"/>
    </location>
    <ligand>
        <name>dimethylallyl diphosphate</name>
        <dbReference type="ChEBI" id="CHEBI:57623"/>
    </ligand>
</feature>
<feature type="binding site" evidence="1">
    <location>
        <position position="77"/>
    </location>
    <ligand>
        <name>isopentenyl diphosphate</name>
        <dbReference type="ChEBI" id="CHEBI:128769"/>
    </ligand>
</feature>
<feature type="binding site" evidence="1">
    <location>
        <position position="99"/>
    </location>
    <ligand>
        <name>[4Fe-4S] cluster</name>
        <dbReference type="ChEBI" id="CHEBI:49883"/>
    </ligand>
</feature>
<feature type="binding site" evidence="1">
    <location>
        <position position="127"/>
    </location>
    <ligand>
        <name>(2E)-4-hydroxy-3-methylbut-2-enyl diphosphate</name>
        <dbReference type="ChEBI" id="CHEBI:128753"/>
    </ligand>
</feature>
<feature type="binding site" evidence="1">
    <location>
        <position position="127"/>
    </location>
    <ligand>
        <name>dimethylallyl diphosphate</name>
        <dbReference type="ChEBI" id="CHEBI:57623"/>
    </ligand>
</feature>
<feature type="binding site" evidence="1">
    <location>
        <position position="127"/>
    </location>
    <ligand>
        <name>isopentenyl diphosphate</name>
        <dbReference type="ChEBI" id="CHEBI:128769"/>
    </ligand>
</feature>
<feature type="binding site" evidence="1">
    <location>
        <position position="165"/>
    </location>
    <ligand>
        <name>(2E)-4-hydroxy-3-methylbut-2-enyl diphosphate</name>
        <dbReference type="ChEBI" id="CHEBI:128753"/>
    </ligand>
</feature>
<feature type="binding site" evidence="1">
    <location>
        <position position="193"/>
    </location>
    <ligand>
        <name>[4Fe-4S] cluster</name>
        <dbReference type="ChEBI" id="CHEBI:49883"/>
    </ligand>
</feature>
<feature type="binding site" evidence="1">
    <location>
        <position position="221"/>
    </location>
    <ligand>
        <name>(2E)-4-hydroxy-3-methylbut-2-enyl diphosphate</name>
        <dbReference type="ChEBI" id="CHEBI:128753"/>
    </ligand>
</feature>
<feature type="binding site" evidence="1">
    <location>
        <position position="221"/>
    </location>
    <ligand>
        <name>dimethylallyl diphosphate</name>
        <dbReference type="ChEBI" id="CHEBI:57623"/>
    </ligand>
</feature>
<feature type="binding site" evidence="1">
    <location>
        <position position="221"/>
    </location>
    <ligand>
        <name>isopentenyl diphosphate</name>
        <dbReference type="ChEBI" id="CHEBI:128769"/>
    </ligand>
</feature>
<feature type="binding site" evidence="1">
    <location>
        <position position="222"/>
    </location>
    <ligand>
        <name>(2E)-4-hydroxy-3-methylbut-2-enyl diphosphate</name>
        <dbReference type="ChEBI" id="CHEBI:128753"/>
    </ligand>
</feature>
<feature type="binding site" evidence="1">
    <location>
        <position position="222"/>
    </location>
    <ligand>
        <name>dimethylallyl diphosphate</name>
        <dbReference type="ChEBI" id="CHEBI:57623"/>
    </ligand>
</feature>
<feature type="binding site" evidence="1">
    <location>
        <position position="222"/>
    </location>
    <ligand>
        <name>isopentenyl diphosphate</name>
        <dbReference type="ChEBI" id="CHEBI:128769"/>
    </ligand>
</feature>
<feature type="binding site" evidence="1">
    <location>
        <position position="223"/>
    </location>
    <ligand>
        <name>(2E)-4-hydroxy-3-methylbut-2-enyl diphosphate</name>
        <dbReference type="ChEBI" id="CHEBI:128753"/>
    </ligand>
</feature>
<feature type="binding site" evidence="1">
    <location>
        <position position="223"/>
    </location>
    <ligand>
        <name>dimethylallyl diphosphate</name>
        <dbReference type="ChEBI" id="CHEBI:57623"/>
    </ligand>
</feature>
<feature type="binding site" evidence="1">
    <location>
        <position position="223"/>
    </location>
    <ligand>
        <name>isopentenyl diphosphate</name>
        <dbReference type="ChEBI" id="CHEBI:128769"/>
    </ligand>
</feature>
<feature type="binding site" evidence="1">
    <location>
        <position position="266"/>
    </location>
    <ligand>
        <name>(2E)-4-hydroxy-3-methylbut-2-enyl diphosphate</name>
        <dbReference type="ChEBI" id="CHEBI:128753"/>
    </ligand>
</feature>
<feature type="binding site" evidence="1">
    <location>
        <position position="266"/>
    </location>
    <ligand>
        <name>dimethylallyl diphosphate</name>
        <dbReference type="ChEBI" id="CHEBI:57623"/>
    </ligand>
</feature>
<feature type="binding site" evidence="1">
    <location>
        <position position="266"/>
    </location>
    <ligand>
        <name>isopentenyl diphosphate</name>
        <dbReference type="ChEBI" id="CHEBI:128769"/>
    </ligand>
</feature>
<reference key="1">
    <citation type="journal article" date="2001" name="J. Bacteriol.">
        <title>Genome sequence and comparative analysis of the solvent-producing bacterium Clostridium acetobutylicum.</title>
        <authorList>
            <person name="Noelling J."/>
            <person name="Breton G."/>
            <person name="Omelchenko M.V."/>
            <person name="Makarova K.S."/>
            <person name="Zeng Q."/>
            <person name="Gibson R."/>
            <person name="Lee H.M."/>
            <person name="Dubois J."/>
            <person name="Qiu D."/>
            <person name="Hitti J."/>
            <person name="Wolf Y.I."/>
            <person name="Tatusov R.L."/>
            <person name="Sabathe F."/>
            <person name="Doucette-Stamm L.A."/>
            <person name="Soucaille P."/>
            <person name="Daly M.J."/>
            <person name="Bennett G.N."/>
            <person name="Koonin E.V."/>
            <person name="Smith D.R."/>
        </authorList>
    </citation>
    <scope>NUCLEOTIDE SEQUENCE [LARGE SCALE GENOMIC DNA]</scope>
    <source>
        <strain>ATCC 824 / DSM 792 / JCM 1419 / IAM 19013 / LMG 5710 / NBRC 13948 / NRRL B-527 / VKM B-1787 / 2291 / W</strain>
    </source>
</reference>
<gene>
    <name evidence="1" type="primary">ispH</name>
    <name type="ordered locus">CA_C1847</name>
</gene>